<feature type="chain" id="PRO_0000263398" description="Peptide chain release factor 1">
    <location>
        <begin position="1"/>
        <end position="358"/>
    </location>
</feature>
<feature type="region of interest" description="Disordered" evidence="2">
    <location>
        <begin position="283"/>
        <end position="306"/>
    </location>
</feature>
<feature type="modified residue" description="N5-methylglutamine" evidence="1">
    <location>
        <position position="234"/>
    </location>
</feature>
<evidence type="ECO:0000255" key="1">
    <source>
        <dbReference type="HAMAP-Rule" id="MF_00093"/>
    </source>
</evidence>
<evidence type="ECO:0000256" key="2">
    <source>
        <dbReference type="SAM" id="MobiDB-lite"/>
    </source>
</evidence>
<proteinExistence type="inferred from homology"/>
<protein>
    <recommendedName>
        <fullName evidence="1">Peptide chain release factor 1</fullName>
        <shortName evidence="1">RF-1</shortName>
    </recommendedName>
</protein>
<dbReference type="EMBL" id="AE008692">
    <property type="protein sequence ID" value="AAV90133.1"/>
    <property type="molecule type" value="Genomic_DNA"/>
</dbReference>
<dbReference type="RefSeq" id="WP_011241281.1">
    <property type="nucleotide sequence ID" value="NZ_CP035711.1"/>
</dbReference>
<dbReference type="SMR" id="Q5NMC7"/>
<dbReference type="STRING" id="264203.ZMO1509"/>
<dbReference type="GeneID" id="79905145"/>
<dbReference type="KEGG" id="zmo:ZMO1509"/>
<dbReference type="eggNOG" id="COG0216">
    <property type="taxonomic scope" value="Bacteria"/>
</dbReference>
<dbReference type="HOGENOM" id="CLU_036856_0_1_5"/>
<dbReference type="Proteomes" id="UP000001173">
    <property type="component" value="Chromosome"/>
</dbReference>
<dbReference type="GO" id="GO:0005737">
    <property type="term" value="C:cytoplasm"/>
    <property type="evidence" value="ECO:0007669"/>
    <property type="project" value="UniProtKB-SubCell"/>
</dbReference>
<dbReference type="GO" id="GO:0016149">
    <property type="term" value="F:translation release factor activity, codon specific"/>
    <property type="evidence" value="ECO:0007669"/>
    <property type="project" value="UniProtKB-UniRule"/>
</dbReference>
<dbReference type="FunFam" id="3.30.160.20:FF:000004">
    <property type="entry name" value="Peptide chain release factor 1"/>
    <property type="match status" value="1"/>
</dbReference>
<dbReference type="FunFam" id="3.30.70.1660:FF:000002">
    <property type="entry name" value="Peptide chain release factor 1"/>
    <property type="match status" value="1"/>
</dbReference>
<dbReference type="FunFam" id="3.30.70.1660:FF:000004">
    <property type="entry name" value="Peptide chain release factor 1"/>
    <property type="match status" value="1"/>
</dbReference>
<dbReference type="Gene3D" id="3.30.160.20">
    <property type="match status" value="1"/>
</dbReference>
<dbReference type="Gene3D" id="3.30.70.1660">
    <property type="match status" value="1"/>
</dbReference>
<dbReference type="Gene3D" id="6.10.140.1950">
    <property type="match status" value="1"/>
</dbReference>
<dbReference type="HAMAP" id="MF_00093">
    <property type="entry name" value="Rel_fac_1"/>
    <property type="match status" value="1"/>
</dbReference>
<dbReference type="InterPro" id="IPR005139">
    <property type="entry name" value="PCRF"/>
</dbReference>
<dbReference type="InterPro" id="IPR000352">
    <property type="entry name" value="Pep_chain_release_fac_I"/>
</dbReference>
<dbReference type="InterPro" id="IPR045853">
    <property type="entry name" value="Pep_chain_release_fac_I_sf"/>
</dbReference>
<dbReference type="InterPro" id="IPR050057">
    <property type="entry name" value="Prokaryotic/Mito_RF"/>
</dbReference>
<dbReference type="InterPro" id="IPR004373">
    <property type="entry name" value="RF-1"/>
</dbReference>
<dbReference type="NCBIfam" id="TIGR00019">
    <property type="entry name" value="prfA"/>
    <property type="match status" value="1"/>
</dbReference>
<dbReference type="NCBIfam" id="NF001859">
    <property type="entry name" value="PRK00591.1"/>
    <property type="match status" value="1"/>
</dbReference>
<dbReference type="PANTHER" id="PTHR43804">
    <property type="entry name" value="LD18447P"/>
    <property type="match status" value="1"/>
</dbReference>
<dbReference type="PANTHER" id="PTHR43804:SF7">
    <property type="entry name" value="LD18447P"/>
    <property type="match status" value="1"/>
</dbReference>
<dbReference type="Pfam" id="PF03462">
    <property type="entry name" value="PCRF"/>
    <property type="match status" value="1"/>
</dbReference>
<dbReference type="Pfam" id="PF00472">
    <property type="entry name" value="RF-1"/>
    <property type="match status" value="1"/>
</dbReference>
<dbReference type="SMART" id="SM00937">
    <property type="entry name" value="PCRF"/>
    <property type="match status" value="1"/>
</dbReference>
<dbReference type="SUPFAM" id="SSF75620">
    <property type="entry name" value="Release factor"/>
    <property type="match status" value="1"/>
</dbReference>
<dbReference type="PROSITE" id="PS00745">
    <property type="entry name" value="RF_PROK_I"/>
    <property type="match status" value="1"/>
</dbReference>
<name>RF1_ZYMMO</name>
<comment type="function">
    <text evidence="1">Peptide chain release factor 1 directs the termination of translation in response to the peptide chain termination codons UAG and UAA.</text>
</comment>
<comment type="subcellular location">
    <subcellularLocation>
        <location evidence="1">Cytoplasm</location>
    </subcellularLocation>
</comment>
<comment type="PTM">
    <text evidence="1">Methylated by PrmC. Methylation increases the termination efficiency of RF1.</text>
</comment>
<comment type="similarity">
    <text evidence="1">Belongs to the prokaryotic/mitochondrial release factor family.</text>
</comment>
<keyword id="KW-0963">Cytoplasm</keyword>
<keyword id="KW-0488">Methylation</keyword>
<keyword id="KW-0648">Protein biosynthesis</keyword>
<keyword id="KW-1185">Reference proteome</keyword>
<organism>
    <name type="scientific">Zymomonas mobilis subsp. mobilis (strain ATCC 31821 / ZM4 / CP4)</name>
    <dbReference type="NCBI Taxonomy" id="264203"/>
    <lineage>
        <taxon>Bacteria</taxon>
        <taxon>Pseudomonadati</taxon>
        <taxon>Pseudomonadota</taxon>
        <taxon>Alphaproteobacteria</taxon>
        <taxon>Sphingomonadales</taxon>
        <taxon>Zymomonadaceae</taxon>
        <taxon>Zymomonas</taxon>
    </lineage>
</organism>
<gene>
    <name evidence="1" type="primary">prfA</name>
    <name type="ordered locus">ZMO1509</name>
</gene>
<accession>Q5NMC7</accession>
<reference key="1">
    <citation type="journal article" date="2005" name="Nat. Biotechnol.">
        <title>The genome sequence of the ethanologenic bacterium Zymomonas mobilis ZM4.</title>
        <authorList>
            <person name="Seo J.-S."/>
            <person name="Chong H."/>
            <person name="Park H.S."/>
            <person name="Yoon K.-O."/>
            <person name="Jung C."/>
            <person name="Kim J.J."/>
            <person name="Hong J.H."/>
            <person name="Kim H."/>
            <person name="Kim J.-H."/>
            <person name="Kil J.-I."/>
            <person name="Park C.J."/>
            <person name="Oh H.-M."/>
            <person name="Lee J.-S."/>
            <person name="Jin S.-J."/>
            <person name="Um H.-W."/>
            <person name="Lee H.-J."/>
            <person name="Oh S.-J."/>
            <person name="Kim J.Y."/>
            <person name="Kang H.L."/>
            <person name="Lee S.Y."/>
            <person name="Lee K.J."/>
            <person name="Kang H.S."/>
        </authorList>
    </citation>
    <scope>NUCLEOTIDE SEQUENCE [LARGE SCALE GENOMIC DNA]</scope>
    <source>
        <strain>ATCC 31821 / ZM4 / CP4</strain>
    </source>
</reference>
<sequence length="358" mass="39320">MIAISPDRLAAIIARREELQAEMARPDLDSNRLVALSREYSEVEPVALAAENVGRLREEGETLEAMTKDDDPELQAMAVEELEANKTALAEAERALALSLLPRDAADERSAILEIRAGTGGDEAALFGGDLLRMYSRYAEEHGWRVEMISASAAELGGYKEVVISITGAGVFARLKFESGVHRVQRVPVTESGGRIHTSAATVAVLPEAEEVDVDIDERDLRIDIFRSSGPGGQSVNTTDSAVRITHIPSGIVVSQQDEKSQHKNKAKAMKVLRARLYERERERLHSERAGQRKSMVGSGDRSERIRTYNFPQGRVTDHRINLTLHRLPEILAGPGLDEVISALIAEDEAERLASLDD</sequence>